<gene>
    <name type="ordered locus">ACIAD3682</name>
</gene>
<accession>Q6F6K9</accession>
<keyword id="KW-0997">Cell inner membrane</keyword>
<keyword id="KW-1003">Cell membrane</keyword>
<keyword id="KW-0472">Membrane</keyword>
<proteinExistence type="inferred from homology"/>
<reference key="1">
    <citation type="journal article" date="2004" name="Nucleic Acids Res.">
        <title>Unique features revealed by the genome sequence of Acinetobacter sp. ADP1, a versatile and naturally transformation competent bacterium.</title>
        <authorList>
            <person name="Barbe V."/>
            <person name="Vallenet D."/>
            <person name="Fonknechten N."/>
            <person name="Kreimeyer A."/>
            <person name="Oztas S."/>
            <person name="Labarre L."/>
            <person name="Cruveiller S."/>
            <person name="Robert C."/>
            <person name="Duprat S."/>
            <person name="Wincker P."/>
            <person name="Ornston L.N."/>
            <person name="Weissenbach J."/>
            <person name="Marliere P."/>
            <person name="Cohen G.N."/>
            <person name="Medigue C."/>
        </authorList>
    </citation>
    <scope>NUCLEOTIDE SEQUENCE [LARGE SCALE GENOMIC DNA]</scope>
    <source>
        <strain>ATCC 33305 / BD413 / ADP1</strain>
    </source>
</reference>
<protein>
    <recommendedName>
        <fullName evidence="1">Putative membrane protein insertion efficiency factor</fullName>
    </recommendedName>
</protein>
<dbReference type="EMBL" id="CR543861">
    <property type="protein sequence ID" value="CAG70308.1"/>
    <property type="molecule type" value="Genomic_DNA"/>
</dbReference>
<dbReference type="STRING" id="202950.GCA_001485005_03179"/>
<dbReference type="GeneID" id="45235839"/>
<dbReference type="KEGG" id="aci:ACIAD3682"/>
<dbReference type="eggNOG" id="COG0759">
    <property type="taxonomic scope" value="Bacteria"/>
</dbReference>
<dbReference type="HOGENOM" id="CLU_144811_2_2_6"/>
<dbReference type="OrthoDB" id="9801753at2"/>
<dbReference type="BioCyc" id="ASP62977:ACIAD_RS16645-MONOMER"/>
<dbReference type="Proteomes" id="UP000000430">
    <property type="component" value="Chromosome"/>
</dbReference>
<dbReference type="GO" id="GO:0005886">
    <property type="term" value="C:plasma membrane"/>
    <property type="evidence" value="ECO:0007669"/>
    <property type="project" value="UniProtKB-SubCell"/>
</dbReference>
<dbReference type="HAMAP" id="MF_00386">
    <property type="entry name" value="UPF0161_YidD"/>
    <property type="match status" value="1"/>
</dbReference>
<dbReference type="InterPro" id="IPR002696">
    <property type="entry name" value="Membr_insert_effic_factor_YidD"/>
</dbReference>
<dbReference type="NCBIfam" id="TIGR00278">
    <property type="entry name" value="membrane protein insertion efficiency factor YidD"/>
    <property type="match status" value="1"/>
</dbReference>
<dbReference type="PANTHER" id="PTHR33383">
    <property type="entry name" value="MEMBRANE PROTEIN INSERTION EFFICIENCY FACTOR-RELATED"/>
    <property type="match status" value="1"/>
</dbReference>
<dbReference type="PANTHER" id="PTHR33383:SF1">
    <property type="entry name" value="MEMBRANE PROTEIN INSERTION EFFICIENCY FACTOR-RELATED"/>
    <property type="match status" value="1"/>
</dbReference>
<dbReference type="Pfam" id="PF01809">
    <property type="entry name" value="YidD"/>
    <property type="match status" value="1"/>
</dbReference>
<dbReference type="SMART" id="SM01234">
    <property type="entry name" value="Haemolytic"/>
    <property type="match status" value="1"/>
</dbReference>
<evidence type="ECO:0000255" key="1">
    <source>
        <dbReference type="HAMAP-Rule" id="MF_00386"/>
    </source>
</evidence>
<comment type="function">
    <text evidence="1">Could be involved in insertion of integral membrane proteins into the membrane.</text>
</comment>
<comment type="subcellular location">
    <subcellularLocation>
        <location evidence="1">Cell inner membrane</location>
        <topology evidence="1">Peripheral membrane protein</topology>
        <orientation evidence="1">Cytoplasmic side</orientation>
    </subcellularLocation>
</comment>
<comment type="similarity">
    <text evidence="1">Belongs to the UPF0161 family.</text>
</comment>
<name>YIDD_ACIAD</name>
<sequence>MVRILHWLIRFYQIAISPMLGPRCRYIPTCSQYSLEAIHTHGAMKGTWLAIHRVCRCHPWGGSGYDPVPPKAIRFISFQQIDSQMLHVTVPFRERLLNLNHSNHLG</sequence>
<organism>
    <name type="scientific">Acinetobacter baylyi (strain ATCC 33305 / BD413 / ADP1)</name>
    <dbReference type="NCBI Taxonomy" id="62977"/>
    <lineage>
        <taxon>Bacteria</taxon>
        <taxon>Pseudomonadati</taxon>
        <taxon>Pseudomonadota</taxon>
        <taxon>Gammaproteobacteria</taxon>
        <taxon>Moraxellales</taxon>
        <taxon>Moraxellaceae</taxon>
        <taxon>Acinetobacter</taxon>
    </lineage>
</organism>
<feature type="chain" id="PRO_0000253068" description="Putative membrane protein insertion efficiency factor">
    <location>
        <begin position="1"/>
        <end position="106"/>
    </location>
</feature>